<dbReference type="EC" id="2.3.1.234" evidence="1"/>
<dbReference type="EMBL" id="CP000746">
    <property type="protein sequence ID" value="ABR75359.1"/>
    <property type="molecule type" value="Genomic_DNA"/>
</dbReference>
<dbReference type="RefSeq" id="WP_012073735.1">
    <property type="nucleotide sequence ID" value="NC_009655.1"/>
</dbReference>
<dbReference type="SMR" id="A6VQW2"/>
<dbReference type="STRING" id="339671.Asuc_2013"/>
<dbReference type="KEGG" id="asu:Asuc_2013"/>
<dbReference type="eggNOG" id="COG0533">
    <property type="taxonomic scope" value="Bacteria"/>
</dbReference>
<dbReference type="HOGENOM" id="CLU_023208_0_0_6"/>
<dbReference type="OrthoDB" id="9806197at2"/>
<dbReference type="Proteomes" id="UP000001114">
    <property type="component" value="Chromosome"/>
</dbReference>
<dbReference type="GO" id="GO:0005737">
    <property type="term" value="C:cytoplasm"/>
    <property type="evidence" value="ECO:0007669"/>
    <property type="project" value="UniProtKB-SubCell"/>
</dbReference>
<dbReference type="GO" id="GO:0005506">
    <property type="term" value="F:iron ion binding"/>
    <property type="evidence" value="ECO:0007669"/>
    <property type="project" value="UniProtKB-UniRule"/>
</dbReference>
<dbReference type="GO" id="GO:0061711">
    <property type="term" value="F:N(6)-L-threonylcarbamoyladenine synthase activity"/>
    <property type="evidence" value="ECO:0007669"/>
    <property type="project" value="UniProtKB-EC"/>
</dbReference>
<dbReference type="GO" id="GO:0002949">
    <property type="term" value="P:tRNA threonylcarbamoyladenosine modification"/>
    <property type="evidence" value="ECO:0007669"/>
    <property type="project" value="UniProtKB-UniRule"/>
</dbReference>
<dbReference type="CDD" id="cd24133">
    <property type="entry name" value="ASKHA_NBD_TsaD_bac"/>
    <property type="match status" value="1"/>
</dbReference>
<dbReference type="FunFam" id="3.30.420.40:FF:000012">
    <property type="entry name" value="tRNA N6-adenosine threonylcarbamoyltransferase"/>
    <property type="match status" value="1"/>
</dbReference>
<dbReference type="FunFam" id="3.30.420.40:FF:000031">
    <property type="entry name" value="tRNA N6-adenosine threonylcarbamoyltransferase"/>
    <property type="match status" value="1"/>
</dbReference>
<dbReference type="Gene3D" id="3.30.420.40">
    <property type="match status" value="2"/>
</dbReference>
<dbReference type="HAMAP" id="MF_01445">
    <property type="entry name" value="TsaD"/>
    <property type="match status" value="1"/>
</dbReference>
<dbReference type="InterPro" id="IPR043129">
    <property type="entry name" value="ATPase_NBD"/>
</dbReference>
<dbReference type="InterPro" id="IPR000905">
    <property type="entry name" value="Gcp-like_dom"/>
</dbReference>
<dbReference type="InterPro" id="IPR017861">
    <property type="entry name" value="KAE1/TsaD"/>
</dbReference>
<dbReference type="InterPro" id="IPR017860">
    <property type="entry name" value="Peptidase_M22_CS"/>
</dbReference>
<dbReference type="InterPro" id="IPR022450">
    <property type="entry name" value="TsaD"/>
</dbReference>
<dbReference type="NCBIfam" id="TIGR00329">
    <property type="entry name" value="gcp_kae1"/>
    <property type="match status" value="1"/>
</dbReference>
<dbReference type="NCBIfam" id="TIGR03723">
    <property type="entry name" value="T6A_TsaD_YgjD"/>
    <property type="match status" value="1"/>
</dbReference>
<dbReference type="PANTHER" id="PTHR11735">
    <property type="entry name" value="TRNA N6-ADENOSINE THREONYLCARBAMOYLTRANSFERASE"/>
    <property type="match status" value="1"/>
</dbReference>
<dbReference type="PANTHER" id="PTHR11735:SF6">
    <property type="entry name" value="TRNA N6-ADENOSINE THREONYLCARBAMOYLTRANSFERASE, MITOCHONDRIAL"/>
    <property type="match status" value="1"/>
</dbReference>
<dbReference type="Pfam" id="PF00814">
    <property type="entry name" value="TsaD"/>
    <property type="match status" value="1"/>
</dbReference>
<dbReference type="PRINTS" id="PR00789">
    <property type="entry name" value="OSIALOPTASE"/>
</dbReference>
<dbReference type="SUPFAM" id="SSF53067">
    <property type="entry name" value="Actin-like ATPase domain"/>
    <property type="match status" value="2"/>
</dbReference>
<dbReference type="PROSITE" id="PS01016">
    <property type="entry name" value="GLYCOPROTEASE"/>
    <property type="match status" value="1"/>
</dbReference>
<comment type="function">
    <text evidence="1">Required for the formation of a threonylcarbamoyl group on adenosine at position 37 (t(6)A37) in tRNAs that read codons beginning with adenine. Is involved in the transfer of the threonylcarbamoyl moiety of threonylcarbamoyl-AMP (TC-AMP) to the N6 group of A37, together with TsaE and TsaB. TsaD likely plays a direct catalytic role in this reaction.</text>
</comment>
<comment type="catalytic activity">
    <reaction evidence="1">
        <text>L-threonylcarbamoyladenylate + adenosine(37) in tRNA = N(6)-L-threonylcarbamoyladenosine(37) in tRNA + AMP + H(+)</text>
        <dbReference type="Rhea" id="RHEA:37059"/>
        <dbReference type="Rhea" id="RHEA-COMP:10162"/>
        <dbReference type="Rhea" id="RHEA-COMP:10163"/>
        <dbReference type="ChEBI" id="CHEBI:15378"/>
        <dbReference type="ChEBI" id="CHEBI:73682"/>
        <dbReference type="ChEBI" id="CHEBI:74411"/>
        <dbReference type="ChEBI" id="CHEBI:74418"/>
        <dbReference type="ChEBI" id="CHEBI:456215"/>
        <dbReference type="EC" id="2.3.1.234"/>
    </reaction>
</comment>
<comment type="cofactor">
    <cofactor evidence="1">
        <name>Fe(2+)</name>
        <dbReference type="ChEBI" id="CHEBI:29033"/>
    </cofactor>
    <text evidence="1">Binds 1 Fe(2+) ion per subunit.</text>
</comment>
<comment type="subcellular location">
    <subcellularLocation>
        <location evidence="1">Cytoplasm</location>
    </subcellularLocation>
</comment>
<comment type="similarity">
    <text evidence="1">Belongs to the KAE1 / TsaD family.</text>
</comment>
<gene>
    <name evidence="1" type="primary">tsaD</name>
    <name type="synonym">gcp</name>
    <name type="ordered locus">Asuc_2013</name>
</gene>
<sequence length="345" mass="36721">MKVLGIETSCDETGVAIYDSEQGLIANQLYTQIALHADYGGVVPELASRDHIRKTAPLIRAALKEADLTAEDIDGIAYTAGPGLVGALLVGATIARSLAFAWNVPAVSVHHMEGHLLAPMLESPQNRPHFPFVALLVSGGHTQLVRVDGVGKYELLGESIDDAAGEAFDKTAKLLGLDYPGGAALSRLAEKGSAGRFTFPKPMTDRPGLDFSFSGLKTAAANTIRQTIKQKGDLTEQTKADIAHAFQTAVVETLAIKCKRALQQTGYNTLVIAGGVSANKQLRHRLAQLMHALGGKVFYPSPQFCTDNGAMIAYVGHLRLQAGESSGLEVDVKPRWVMTELPALA</sequence>
<reference key="1">
    <citation type="journal article" date="2010" name="BMC Genomics">
        <title>A genomic perspective on the potential of Actinobacillus succinogenes for industrial succinate production.</title>
        <authorList>
            <person name="McKinlay J.B."/>
            <person name="Laivenieks M."/>
            <person name="Schindler B.D."/>
            <person name="McKinlay A.A."/>
            <person name="Siddaramappa S."/>
            <person name="Challacombe J.F."/>
            <person name="Lowry S.R."/>
            <person name="Clum A."/>
            <person name="Lapidus A.L."/>
            <person name="Burkhart K.B."/>
            <person name="Harkins V."/>
            <person name="Vieille C."/>
        </authorList>
    </citation>
    <scope>NUCLEOTIDE SEQUENCE [LARGE SCALE GENOMIC DNA]</scope>
    <source>
        <strain>ATCC 55618 / DSM 22257 / CCUG 43843 / 130Z</strain>
    </source>
</reference>
<name>TSAD_ACTSZ</name>
<accession>A6VQW2</accession>
<evidence type="ECO:0000255" key="1">
    <source>
        <dbReference type="HAMAP-Rule" id="MF_01445"/>
    </source>
</evidence>
<organism>
    <name type="scientific">Actinobacillus succinogenes (strain ATCC 55618 / DSM 22257 / CCUG 43843 / 130Z)</name>
    <dbReference type="NCBI Taxonomy" id="339671"/>
    <lineage>
        <taxon>Bacteria</taxon>
        <taxon>Pseudomonadati</taxon>
        <taxon>Pseudomonadota</taxon>
        <taxon>Gammaproteobacteria</taxon>
        <taxon>Pasteurellales</taxon>
        <taxon>Pasteurellaceae</taxon>
        <taxon>Actinobacillus</taxon>
    </lineage>
</organism>
<keyword id="KW-0012">Acyltransferase</keyword>
<keyword id="KW-0963">Cytoplasm</keyword>
<keyword id="KW-0408">Iron</keyword>
<keyword id="KW-0479">Metal-binding</keyword>
<keyword id="KW-1185">Reference proteome</keyword>
<keyword id="KW-0808">Transferase</keyword>
<keyword id="KW-0819">tRNA processing</keyword>
<protein>
    <recommendedName>
        <fullName evidence="1">tRNA N6-adenosine threonylcarbamoyltransferase</fullName>
        <ecNumber evidence="1">2.3.1.234</ecNumber>
    </recommendedName>
    <alternativeName>
        <fullName evidence="1">N6-L-threonylcarbamoyladenine synthase</fullName>
        <shortName evidence="1">t(6)A synthase</shortName>
    </alternativeName>
    <alternativeName>
        <fullName evidence="1">t(6)A37 threonylcarbamoyladenosine biosynthesis protein TsaD</fullName>
    </alternativeName>
    <alternativeName>
        <fullName evidence="1">tRNA threonylcarbamoyladenosine biosynthesis protein TsaD</fullName>
    </alternativeName>
</protein>
<proteinExistence type="inferred from homology"/>
<feature type="chain" id="PRO_1000073521" description="tRNA N6-adenosine threonylcarbamoyltransferase">
    <location>
        <begin position="1"/>
        <end position="345"/>
    </location>
</feature>
<feature type="binding site" evidence="1">
    <location>
        <position position="111"/>
    </location>
    <ligand>
        <name>Fe cation</name>
        <dbReference type="ChEBI" id="CHEBI:24875"/>
    </ligand>
</feature>
<feature type="binding site" evidence="1">
    <location>
        <position position="115"/>
    </location>
    <ligand>
        <name>Fe cation</name>
        <dbReference type="ChEBI" id="CHEBI:24875"/>
    </ligand>
</feature>
<feature type="binding site" evidence="1">
    <location>
        <begin position="136"/>
        <end position="140"/>
    </location>
    <ligand>
        <name>substrate</name>
    </ligand>
</feature>
<feature type="binding site" evidence="1">
    <location>
        <position position="169"/>
    </location>
    <ligand>
        <name>substrate</name>
    </ligand>
</feature>
<feature type="binding site" evidence="1">
    <location>
        <position position="182"/>
    </location>
    <ligand>
        <name>substrate</name>
    </ligand>
</feature>
<feature type="binding site" evidence="1">
    <location>
        <position position="279"/>
    </location>
    <ligand>
        <name>substrate</name>
    </ligand>
</feature>
<feature type="binding site" evidence="1">
    <location>
        <position position="307"/>
    </location>
    <ligand>
        <name>Fe cation</name>
        <dbReference type="ChEBI" id="CHEBI:24875"/>
    </ligand>
</feature>